<keyword id="KW-0002">3D-structure</keyword>
<keyword id="KW-0328">Glycosyltransferase</keyword>
<keyword id="KW-0808">Transferase</keyword>
<organism>
    <name type="scientific">Listeria innocua serovar 6a (strain ATCC BAA-680 / CLIP 11262)</name>
    <dbReference type="NCBI Taxonomy" id="272626"/>
    <lineage>
        <taxon>Bacteria</taxon>
        <taxon>Bacillati</taxon>
        <taxon>Bacillota</taxon>
        <taxon>Bacilli</taxon>
        <taxon>Bacillales</taxon>
        <taxon>Listeriaceae</taxon>
        <taxon>Listeria</taxon>
    </lineage>
</organism>
<comment type="function">
    <text evidence="1">Catalyzes the reversible phosphorolysis of 1,2-beta-oligomannan (PubMed:26632508). In phosphorolytic reactions, prefers beta-1,2-mannobiose (beta-1,2-Man2) as substrate, but can also use beta-1,2-mannotriose (PubMed:26632508).</text>
</comment>
<comment type="catalytic activity">
    <reaction evidence="1">
        <text>beta-D-mannopyranosyl-(1-&gt;2)-D-mannopyranose + phosphate = alpha-D-mannose 1-phosphate + D-mannose</text>
        <dbReference type="Rhea" id="RHEA:49404"/>
        <dbReference type="ChEBI" id="CHEBI:4208"/>
        <dbReference type="ChEBI" id="CHEBI:43474"/>
        <dbReference type="ChEBI" id="CHEBI:58409"/>
        <dbReference type="ChEBI" id="CHEBI:62037"/>
        <dbReference type="EC" id="2.4.1.339"/>
    </reaction>
</comment>
<comment type="biophysicochemical properties">
    <kinetics>
        <KM evidence="1">2.1 mM for D-mannose (for the synthetic reaction)</KM>
        <KM evidence="1">1.5 mM for D-fructose (for the synthetic reaction)</KM>
        <KM evidence="1">5.1 mM for beta-1,2-Man2 (for the synthetic reaction)</KM>
        <KM evidence="1">3.1 mM for alpha-D-mannose 1-phosphate (for the synthetic reaction)</KM>
        <text evidence="1">kcat is 31 sec(-1) with D-mannose as substrate (for the synthetic reaction). kcat is 3.9 sec(-1) with D-fructose as substrate (for the synthetic reaction). kcat is 12 sec(-1) with beta-1,2-Man2 as substrate (for the synthetic reaction). kcat is 33 sec(-1) with alpha-D-mannose 1-phosphate as substrate (for the synthetic reaction). kcat is 35 sec(-1) with beta-1,2-Man2 as substrate (for the phosphorolytic reaction). kcat is 12 sec(-1) with beta-1,2-mannotriose as substrate (for the phosphorolytic reaction).</text>
    </kinetics>
    <phDependence>
        <text evidence="1">Optimum pH is 7.0 for phosphorolytic activity. Optimum pH is 6.0 for the synthetic reaction.</text>
    </phDependence>
</comment>
<comment type="subunit">
    <text evidence="1">Homodimer.</text>
</comment>
<comment type="similarity">
    <text evidence="3">Belongs to the glycosyl hydrolase 130 family.</text>
</comment>
<dbReference type="EC" id="2.4.1.339" evidence="1"/>
<dbReference type="EMBL" id="AL596166">
    <property type="protein sequence ID" value="CAC96089.1"/>
    <property type="molecule type" value="Genomic_DNA"/>
</dbReference>
<dbReference type="PIR" id="AI1539">
    <property type="entry name" value="AI1539"/>
</dbReference>
<dbReference type="RefSeq" id="WP_003761245.1">
    <property type="nucleotide sequence ID" value="NC_003212.1"/>
</dbReference>
<dbReference type="PDB" id="5B0P">
    <property type="method" value="X-ray"/>
    <property type="resolution" value="1.90 A"/>
    <property type="chains" value="A/B=1-355"/>
</dbReference>
<dbReference type="PDB" id="5B0Q">
    <property type="method" value="X-ray"/>
    <property type="resolution" value="2.30 A"/>
    <property type="chains" value="A/B=1-355"/>
</dbReference>
<dbReference type="PDB" id="5B0R">
    <property type="method" value="X-ray"/>
    <property type="resolution" value="1.80 A"/>
    <property type="chains" value="A/B=1-355"/>
</dbReference>
<dbReference type="PDB" id="5B0S">
    <property type="method" value="X-ray"/>
    <property type="resolution" value="2.10 A"/>
    <property type="chains" value="A/B=1-355"/>
</dbReference>
<dbReference type="PDBsum" id="5B0P"/>
<dbReference type="PDBsum" id="5B0Q"/>
<dbReference type="PDBsum" id="5B0R"/>
<dbReference type="PDBsum" id="5B0S"/>
<dbReference type="SMR" id="Q92DF6"/>
<dbReference type="MINT" id="Q92DF6"/>
<dbReference type="STRING" id="272626.gene:17565184"/>
<dbReference type="CAZy" id="GH130">
    <property type="family name" value="Glycoside Hydrolase Family 130"/>
</dbReference>
<dbReference type="GeneID" id="93234300"/>
<dbReference type="KEGG" id="lin:lin0857"/>
<dbReference type="eggNOG" id="COG2152">
    <property type="taxonomic scope" value="Bacteria"/>
</dbReference>
<dbReference type="HOGENOM" id="CLU_046648_0_0_9"/>
<dbReference type="OrthoDB" id="9759709at2"/>
<dbReference type="BRENDA" id="2.4.1.339">
    <property type="organism ID" value="3044"/>
</dbReference>
<dbReference type="EvolutionaryTrace" id="Q92DF6"/>
<dbReference type="Proteomes" id="UP000002513">
    <property type="component" value="Chromosome"/>
</dbReference>
<dbReference type="GO" id="GO:0016757">
    <property type="term" value="F:glycosyltransferase activity"/>
    <property type="evidence" value="ECO:0007669"/>
    <property type="project" value="UniProtKB-KW"/>
</dbReference>
<dbReference type="CDD" id="cd18612">
    <property type="entry name" value="GH130_Lin0857-like"/>
    <property type="match status" value="1"/>
</dbReference>
<dbReference type="Gene3D" id="2.115.10.20">
    <property type="entry name" value="Glycosyl hydrolase domain, family 43"/>
    <property type="match status" value="1"/>
</dbReference>
<dbReference type="InterPro" id="IPR023296">
    <property type="entry name" value="Glyco_hydro_beta-prop_sf"/>
</dbReference>
<dbReference type="InterPro" id="IPR007184">
    <property type="entry name" value="Mannoside_phosphorylase"/>
</dbReference>
<dbReference type="PANTHER" id="PTHR34106">
    <property type="entry name" value="GLYCOSIDASE"/>
    <property type="match status" value="1"/>
</dbReference>
<dbReference type="PANTHER" id="PTHR34106:SF5">
    <property type="entry name" value="GLYCOSIDASE"/>
    <property type="match status" value="1"/>
</dbReference>
<dbReference type="Pfam" id="PF04041">
    <property type="entry name" value="Glyco_hydro_130"/>
    <property type="match status" value="1"/>
</dbReference>
<dbReference type="PIRSF" id="PIRSF016202">
    <property type="entry name" value="PH1107"/>
    <property type="match status" value="1"/>
</dbReference>
<dbReference type="SUPFAM" id="SSF75005">
    <property type="entry name" value="Arabinanase/levansucrase/invertase"/>
    <property type="match status" value="1"/>
</dbReference>
<protein>
    <recommendedName>
        <fullName evidence="2">Beta-1,2-mannobiose phosphorylase</fullName>
        <ecNumber evidence="1">2.4.1.339</ecNumber>
    </recommendedName>
</protein>
<reference key="1">
    <citation type="journal article" date="2001" name="Science">
        <title>Comparative genomics of Listeria species.</title>
        <authorList>
            <person name="Glaser P."/>
            <person name="Frangeul L."/>
            <person name="Buchrieser C."/>
            <person name="Rusniok C."/>
            <person name="Amend A."/>
            <person name="Baquero F."/>
            <person name="Berche P."/>
            <person name="Bloecker H."/>
            <person name="Brandt P."/>
            <person name="Chakraborty T."/>
            <person name="Charbit A."/>
            <person name="Chetouani F."/>
            <person name="Couve E."/>
            <person name="de Daruvar A."/>
            <person name="Dehoux P."/>
            <person name="Domann E."/>
            <person name="Dominguez-Bernal G."/>
            <person name="Duchaud E."/>
            <person name="Durant L."/>
            <person name="Dussurget O."/>
            <person name="Entian K.-D."/>
            <person name="Fsihi H."/>
            <person name="Garcia-del Portillo F."/>
            <person name="Garrido P."/>
            <person name="Gautier L."/>
            <person name="Goebel W."/>
            <person name="Gomez-Lopez N."/>
            <person name="Hain T."/>
            <person name="Hauf J."/>
            <person name="Jackson D."/>
            <person name="Jones L.-M."/>
            <person name="Kaerst U."/>
            <person name="Kreft J."/>
            <person name="Kuhn M."/>
            <person name="Kunst F."/>
            <person name="Kurapkat G."/>
            <person name="Madueno E."/>
            <person name="Maitournam A."/>
            <person name="Mata Vicente J."/>
            <person name="Ng E."/>
            <person name="Nedjari H."/>
            <person name="Nordsiek G."/>
            <person name="Novella S."/>
            <person name="de Pablos B."/>
            <person name="Perez-Diaz J.-C."/>
            <person name="Purcell R."/>
            <person name="Remmel B."/>
            <person name="Rose M."/>
            <person name="Schlueter T."/>
            <person name="Simoes N."/>
            <person name="Tierrez A."/>
            <person name="Vazquez-Boland J.-A."/>
            <person name="Voss H."/>
            <person name="Wehland J."/>
            <person name="Cossart P."/>
        </authorList>
    </citation>
    <scope>NUCLEOTIDE SEQUENCE [LARGE SCALE GENOMIC DNA]</scope>
    <source>
        <strain>ATCC BAA-680 / CLIP 11262</strain>
    </source>
</reference>
<reference evidence="5 6 7 8" key="2">
    <citation type="journal article" date="2015" name="FEBS Lett.">
        <title>Characterization and crystal structure determination of beta-1,2-mannobiose phosphorylase from Listeria innocua.</title>
        <authorList>
            <person name="Tsuda T."/>
            <person name="Nihira T."/>
            <person name="Chiku K."/>
            <person name="Suzuki E."/>
            <person name="Arakawa T."/>
            <person name="Nishimoto M."/>
            <person name="Kitaoka M."/>
            <person name="Nakai H."/>
            <person name="Fushinobu S."/>
        </authorList>
    </citation>
    <scope>X-RAY CRYSTALLOGRAPHY (1.80 ANGSTROMS) OF APOENZYME AND IN COMPLEXES WITH MANNOSE; BETA-1,2-MANNOBIOSE AND BETA-1,2-MANNOTRIOSE</scope>
    <scope>FUNCTION</scope>
    <scope>CATALYTIC ACTIVITY</scope>
    <scope>BIOPHYSICOCHEMICAL PROPERTIES</scope>
    <scope>SUBUNIT</scope>
    <source>
        <strain>ATCC BAA-680 / CLIP 11262</strain>
    </source>
</reference>
<feature type="chain" id="PRO_0000452510" description="Beta-1,2-mannobiose phosphorylase">
    <location>
        <begin position="1"/>
        <end position="355"/>
    </location>
</feature>
<feature type="binding site" evidence="1 8">
    <location>
        <position position="31"/>
    </location>
    <ligand>
        <name>beta-D-Manp-(1-&gt;2)-beta-D-Manp-(1-&gt;2)-D-Manp</name>
        <dbReference type="ChEBI" id="CHEBI:131448"/>
    </ligand>
</feature>
<feature type="binding site" evidence="1 8">
    <location>
        <position position="46"/>
    </location>
    <ligand>
        <name>beta-D-Manp-(1-&gt;2)-beta-D-Manp-(1-&gt;2)-D-Manp</name>
        <dbReference type="ChEBI" id="CHEBI:131448"/>
    </ligand>
</feature>
<feature type="binding site" evidence="1 8">
    <location>
        <position position="89"/>
    </location>
    <ligand>
        <name>beta-D-Manp-(1-&gt;2)-beta-D-Manp-(1-&gt;2)-D-Manp</name>
        <dbReference type="ChEBI" id="CHEBI:131448"/>
    </ligand>
</feature>
<feature type="binding site" evidence="1 8">
    <location>
        <begin position="140"/>
        <end position="141"/>
    </location>
    <ligand>
        <name>beta-D-Manp-(1-&gt;2)-beta-D-Manp-(1-&gt;2)-D-Manp</name>
        <dbReference type="ChEBI" id="CHEBI:131448"/>
    </ligand>
</feature>
<feature type="binding site" evidence="1 8">
    <location>
        <position position="188"/>
    </location>
    <ligand>
        <name>beta-D-Manp-(1-&gt;2)-beta-D-Manp-(1-&gt;2)-D-Manp</name>
        <dbReference type="ChEBI" id="CHEBI:131448"/>
    </ligand>
</feature>
<feature type="binding site" evidence="1 8">
    <location>
        <position position="273"/>
    </location>
    <ligand>
        <name>beta-D-Manp-(1-&gt;2)-beta-D-Manp-(1-&gt;2)-D-Manp</name>
        <dbReference type="ChEBI" id="CHEBI:131448"/>
    </ligand>
</feature>
<feature type="binding site" evidence="1 8">
    <location>
        <position position="333"/>
    </location>
    <ligand>
        <name>beta-D-Manp-(1-&gt;2)-beta-D-Manp-(1-&gt;2)-D-Manp</name>
        <dbReference type="ChEBI" id="CHEBI:131448"/>
    </ligand>
</feature>
<feature type="strand" evidence="11">
    <location>
        <begin position="10"/>
        <end position="12"/>
    </location>
</feature>
<feature type="helix" evidence="11">
    <location>
        <begin position="14"/>
        <end position="16"/>
    </location>
</feature>
<feature type="strand" evidence="11">
    <location>
        <begin position="24"/>
        <end position="37"/>
    </location>
</feature>
<feature type="strand" evidence="11">
    <location>
        <begin position="40"/>
        <end position="51"/>
    </location>
</feature>
<feature type="strand" evidence="11">
    <location>
        <begin position="58"/>
        <end position="65"/>
    </location>
</feature>
<feature type="turn" evidence="11">
    <location>
        <begin position="66"/>
        <end position="69"/>
    </location>
</feature>
<feature type="strand" evidence="11">
    <location>
        <begin position="70"/>
        <end position="77"/>
    </location>
</feature>
<feature type="strand" evidence="11">
    <location>
        <begin position="90"/>
        <end position="93"/>
    </location>
</feature>
<feature type="helix" evidence="10">
    <location>
        <begin position="94"/>
        <end position="96"/>
    </location>
</feature>
<feature type="strand" evidence="11">
    <location>
        <begin position="101"/>
        <end position="119"/>
    </location>
</feature>
<feature type="strand" evidence="11">
    <location>
        <begin position="138"/>
        <end position="147"/>
    </location>
</feature>
<feature type="strand" evidence="11">
    <location>
        <begin position="150"/>
        <end position="159"/>
    </location>
</feature>
<feature type="strand" evidence="11">
    <location>
        <begin position="162"/>
        <end position="175"/>
    </location>
</feature>
<feature type="strand" evidence="11">
    <location>
        <begin position="177"/>
        <end position="183"/>
    </location>
</feature>
<feature type="strand" evidence="11">
    <location>
        <begin position="200"/>
        <end position="205"/>
    </location>
</feature>
<feature type="strand" evidence="11">
    <location>
        <begin position="210"/>
        <end position="212"/>
    </location>
</feature>
<feature type="strand" evidence="11">
    <location>
        <begin position="217"/>
        <end position="235"/>
    </location>
</feature>
<feature type="strand" evidence="11">
    <location>
        <begin position="244"/>
        <end position="249"/>
    </location>
</feature>
<feature type="strand" evidence="11">
    <location>
        <begin position="254"/>
        <end position="256"/>
    </location>
</feature>
<feature type="strand" evidence="11">
    <location>
        <begin position="259"/>
        <end position="267"/>
    </location>
</feature>
<feature type="strand" evidence="11">
    <location>
        <begin position="273"/>
        <end position="280"/>
    </location>
</feature>
<feature type="strand" evidence="11">
    <location>
        <begin position="287"/>
        <end position="291"/>
    </location>
</feature>
<feature type="helix" evidence="11">
    <location>
        <begin position="302"/>
        <end position="305"/>
    </location>
</feature>
<feature type="strand" evidence="9">
    <location>
        <begin position="306"/>
        <end position="309"/>
    </location>
</feature>
<feature type="strand" evidence="11">
    <location>
        <begin position="311"/>
        <end position="321"/>
    </location>
</feature>
<feature type="strand" evidence="11">
    <location>
        <begin position="324"/>
        <end position="331"/>
    </location>
</feature>
<feature type="turn" evidence="11">
    <location>
        <begin position="332"/>
        <end position="334"/>
    </location>
</feature>
<feature type="strand" evidence="11">
    <location>
        <begin position="335"/>
        <end position="342"/>
    </location>
</feature>
<feature type="helix" evidence="11">
    <location>
        <begin position="343"/>
        <end position="352"/>
    </location>
</feature>
<sequence>MNIYRYEENPLITPLDVKPIHEGFEVIGAFNGGVAEYNGEVLLLLRVAEKPVSEDPEIVLAPVYNAKNKELELQSFRLDDENYDFEDPRMIRSKAKLEGFSYLTSLSYIRIARSKDGHHFTLDEKPFLYPFNEYQTFGIEDARVTQIGDTYHVNFSAVSEFGVADALVTTKDFENLEYQGNIFAPENKDVLIFPEKINGKYYALHRPSLKSIGNLDIWIASSPDLRSFGDHRHLLGIRPGEYDSGRVGGGCVPIKTEEGWLILYHGATEENRYVMGAALLDLNDPTIVLKRTKTPILEPVADYEKNGFFGDVVFACGAIQEGDTLHMYYGVADTSMAGCDMKISEILHQLEVEAK</sequence>
<accession>Q92DF6</accession>
<gene>
    <name evidence="4" type="ordered locus">lin0857</name>
</gene>
<proteinExistence type="evidence at protein level"/>
<evidence type="ECO:0000269" key="1">
    <source>
    </source>
</evidence>
<evidence type="ECO:0000303" key="2">
    <source>
    </source>
</evidence>
<evidence type="ECO:0000305" key="3"/>
<evidence type="ECO:0000312" key="4">
    <source>
        <dbReference type="EMBL" id="CAC96089.1"/>
    </source>
</evidence>
<evidence type="ECO:0007744" key="5">
    <source>
        <dbReference type="PDB" id="5B0P"/>
    </source>
</evidence>
<evidence type="ECO:0007744" key="6">
    <source>
        <dbReference type="PDB" id="5B0Q"/>
    </source>
</evidence>
<evidence type="ECO:0007744" key="7">
    <source>
        <dbReference type="PDB" id="5B0R"/>
    </source>
</evidence>
<evidence type="ECO:0007744" key="8">
    <source>
        <dbReference type="PDB" id="5B0S"/>
    </source>
</evidence>
<evidence type="ECO:0007829" key="9">
    <source>
        <dbReference type="PDB" id="5B0P"/>
    </source>
</evidence>
<evidence type="ECO:0007829" key="10">
    <source>
        <dbReference type="PDB" id="5B0Q"/>
    </source>
</evidence>
<evidence type="ECO:0007829" key="11">
    <source>
        <dbReference type="PDB" id="5B0R"/>
    </source>
</evidence>
<name>BMBP_LISIN</name>